<keyword id="KW-1003">Cell membrane</keyword>
<keyword id="KW-0472">Membrane</keyword>
<keyword id="KW-1185">Reference proteome</keyword>
<keyword id="KW-0808">Transferase</keyword>
<keyword id="KW-0812">Transmembrane</keyword>
<keyword id="KW-1133">Transmembrane helix</keyword>
<sequence length="382" mass="44431">MNRPSWSTAFNIGGGFPIQWYGIIVSIGIIFAILMFVFKLIYCYKLQDNSFYFFIFIAVLTMVLGARLWSFVIGDSNFANNNFFDFRNGGLAIQGGILLTSIVGVIYFNFFLNSKTNKTKTIAELLNNKNEIKAVYVERNISVLVMLDLIAPCVLIGQAIGRWGNFFNQEVYGFALAGTMNDPQALANTQWGFLKILMPKVWDGMWIDGQFRIPLFLIESFFNTIFFVLIYFVMDFIRGVKSGTIGFSYFLATGIIRLILENFRDQTFYFQTSITTSILFIVVGILGIFYCQFIHVKLRNYFWTYFFLYAFYKVAAFFTTLFLNNRKQMAQQKFAFYEKSLPNKKRSFFEMKYYNDVTTPKIYRLTDQEMKLFDKLEAVTTS</sequence>
<gene>
    <name evidence="1" type="primary">lgt</name>
    <name type="ordered locus">MG086</name>
</gene>
<dbReference type="EC" id="2.5.1.145" evidence="1"/>
<dbReference type="EMBL" id="L43967">
    <property type="protein sequence ID" value="AAC71304.1"/>
    <property type="molecule type" value="Genomic_DNA"/>
</dbReference>
<dbReference type="PIR" id="E64209">
    <property type="entry name" value="E64209"/>
</dbReference>
<dbReference type="RefSeq" id="WP_009885643.1">
    <property type="nucleotide sequence ID" value="NC_000908.2"/>
</dbReference>
<dbReference type="FunCoup" id="P47332">
    <property type="interactions" value="89"/>
</dbReference>
<dbReference type="STRING" id="243273.MG_086"/>
<dbReference type="GeneID" id="88282209"/>
<dbReference type="KEGG" id="mge:MG_086"/>
<dbReference type="eggNOG" id="COG0682">
    <property type="taxonomic scope" value="Bacteria"/>
</dbReference>
<dbReference type="HOGENOM" id="CLU_013386_0_2_14"/>
<dbReference type="InParanoid" id="P47332"/>
<dbReference type="OrthoDB" id="871140at2"/>
<dbReference type="BioCyc" id="MGEN243273:G1GJ2-98-MONOMER"/>
<dbReference type="UniPathway" id="UPA00664"/>
<dbReference type="Proteomes" id="UP000000807">
    <property type="component" value="Chromosome"/>
</dbReference>
<dbReference type="GO" id="GO:0005886">
    <property type="term" value="C:plasma membrane"/>
    <property type="evidence" value="ECO:0000318"/>
    <property type="project" value="GO_Central"/>
</dbReference>
<dbReference type="GO" id="GO:0008961">
    <property type="term" value="F:phosphatidylglycerol-prolipoprotein diacylglyceryl transferase activity"/>
    <property type="evidence" value="ECO:0000318"/>
    <property type="project" value="GO_Central"/>
</dbReference>
<dbReference type="GO" id="GO:0042158">
    <property type="term" value="P:lipoprotein biosynthetic process"/>
    <property type="evidence" value="ECO:0000318"/>
    <property type="project" value="GO_Central"/>
</dbReference>
<dbReference type="HAMAP" id="MF_01147">
    <property type="entry name" value="Lgt"/>
    <property type="match status" value="1"/>
</dbReference>
<dbReference type="InterPro" id="IPR001640">
    <property type="entry name" value="Lgt"/>
</dbReference>
<dbReference type="NCBIfam" id="TIGR00544">
    <property type="entry name" value="lgt"/>
    <property type="match status" value="1"/>
</dbReference>
<dbReference type="PANTHER" id="PTHR30589:SF0">
    <property type="entry name" value="PHOSPHATIDYLGLYCEROL--PROLIPOPROTEIN DIACYLGLYCERYL TRANSFERASE"/>
    <property type="match status" value="1"/>
</dbReference>
<dbReference type="PANTHER" id="PTHR30589">
    <property type="entry name" value="PROLIPOPROTEIN DIACYLGLYCERYL TRANSFERASE"/>
    <property type="match status" value="1"/>
</dbReference>
<dbReference type="Pfam" id="PF01790">
    <property type="entry name" value="LGT"/>
    <property type="match status" value="2"/>
</dbReference>
<dbReference type="PROSITE" id="PS01311">
    <property type="entry name" value="LGT"/>
    <property type="match status" value="1"/>
</dbReference>
<name>LGT_MYCGE</name>
<feature type="chain" id="PRO_0000172633" description="Phosphatidylglycerol--prolipoprotein diacylglyceryl transferase">
    <location>
        <begin position="1"/>
        <end position="382"/>
    </location>
</feature>
<feature type="transmembrane region" description="Helical" evidence="1">
    <location>
        <begin position="18"/>
        <end position="38"/>
    </location>
</feature>
<feature type="transmembrane region" description="Helical" evidence="1">
    <location>
        <begin position="53"/>
        <end position="73"/>
    </location>
</feature>
<feature type="transmembrane region" description="Helical" evidence="1">
    <location>
        <begin position="91"/>
        <end position="111"/>
    </location>
</feature>
<feature type="transmembrane region" description="Helical" evidence="1">
    <location>
        <begin position="213"/>
        <end position="233"/>
    </location>
</feature>
<feature type="transmembrane region" description="Helical" evidence="1">
    <location>
        <begin position="243"/>
        <end position="263"/>
    </location>
</feature>
<feature type="transmembrane region" description="Helical" evidence="1">
    <location>
        <begin position="274"/>
        <end position="294"/>
    </location>
</feature>
<feature type="transmembrane region" description="Helical" evidence="1">
    <location>
        <begin position="302"/>
        <end position="322"/>
    </location>
</feature>
<feature type="binding site" evidence="1">
    <location>
        <position position="162"/>
    </location>
    <ligand>
        <name>a 1,2-diacyl-sn-glycero-3-phospho-(1'-sn-glycerol)</name>
        <dbReference type="ChEBI" id="CHEBI:64716"/>
    </ligand>
</feature>
<comment type="function">
    <text evidence="1">Catalyzes the transfer of the diacylglyceryl group from phosphatidylglycerol to the sulfhydryl group of the N-terminal cysteine of a prolipoprotein, the first step in the formation of mature lipoproteins.</text>
</comment>
<comment type="catalytic activity">
    <reaction evidence="1">
        <text>L-cysteinyl-[prolipoprotein] + a 1,2-diacyl-sn-glycero-3-phospho-(1'-sn-glycerol) = an S-1,2-diacyl-sn-glyceryl-L-cysteinyl-[prolipoprotein] + sn-glycerol 1-phosphate + H(+)</text>
        <dbReference type="Rhea" id="RHEA:56712"/>
        <dbReference type="Rhea" id="RHEA-COMP:14679"/>
        <dbReference type="Rhea" id="RHEA-COMP:14680"/>
        <dbReference type="ChEBI" id="CHEBI:15378"/>
        <dbReference type="ChEBI" id="CHEBI:29950"/>
        <dbReference type="ChEBI" id="CHEBI:57685"/>
        <dbReference type="ChEBI" id="CHEBI:64716"/>
        <dbReference type="ChEBI" id="CHEBI:140658"/>
        <dbReference type="EC" id="2.5.1.145"/>
    </reaction>
</comment>
<comment type="pathway">
    <text evidence="1">Protein modification; lipoprotein biosynthesis (diacylglyceryl transfer).</text>
</comment>
<comment type="subcellular location">
    <subcellularLocation>
        <location evidence="1">Cell membrane</location>
        <topology evidence="1">Multi-pass membrane protein</topology>
    </subcellularLocation>
</comment>
<comment type="similarity">
    <text evidence="1 2">Belongs to the Lgt family.</text>
</comment>
<protein>
    <recommendedName>
        <fullName evidence="1">Phosphatidylglycerol--prolipoprotein diacylglyceryl transferase</fullName>
        <ecNumber evidence="1">2.5.1.145</ecNumber>
    </recommendedName>
</protein>
<accession>P47332</accession>
<reference key="1">
    <citation type="journal article" date="1995" name="Science">
        <title>The minimal gene complement of Mycoplasma genitalium.</title>
        <authorList>
            <person name="Fraser C.M."/>
            <person name="Gocayne J.D."/>
            <person name="White O."/>
            <person name="Adams M.D."/>
            <person name="Clayton R.A."/>
            <person name="Fleischmann R.D."/>
            <person name="Bult C.J."/>
            <person name="Kerlavage A.R."/>
            <person name="Sutton G.G."/>
            <person name="Kelley J.M."/>
            <person name="Fritchman J.L."/>
            <person name="Weidman J.F."/>
            <person name="Small K.V."/>
            <person name="Sandusky M."/>
            <person name="Fuhrmann J.L."/>
            <person name="Nguyen D.T."/>
            <person name="Utterback T.R."/>
            <person name="Saudek D.M."/>
            <person name="Phillips C.A."/>
            <person name="Merrick J.M."/>
            <person name="Tomb J.-F."/>
            <person name="Dougherty B.A."/>
            <person name="Bott K.F."/>
            <person name="Hu P.-C."/>
            <person name="Lucier T.S."/>
            <person name="Peterson S.N."/>
            <person name="Smith H.O."/>
            <person name="Hutchison C.A. III"/>
            <person name="Venter J.C."/>
        </authorList>
    </citation>
    <scope>NUCLEOTIDE SEQUENCE [LARGE SCALE GENOMIC DNA]</scope>
    <source>
        <strain>ATCC 33530 / DSM 19775 / NCTC 10195 / G37</strain>
    </source>
</reference>
<evidence type="ECO:0000255" key="1">
    <source>
        <dbReference type="HAMAP-Rule" id="MF_01147"/>
    </source>
</evidence>
<evidence type="ECO:0000305" key="2"/>
<organism>
    <name type="scientific">Mycoplasma genitalium (strain ATCC 33530 / DSM 19775 / NCTC 10195 / G37)</name>
    <name type="common">Mycoplasmoides genitalium</name>
    <dbReference type="NCBI Taxonomy" id="243273"/>
    <lineage>
        <taxon>Bacteria</taxon>
        <taxon>Bacillati</taxon>
        <taxon>Mycoplasmatota</taxon>
        <taxon>Mycoplasmoidales</taxon>
        <taxon>Mycoplasmoidaceae</taxon>
        <taxon>Mycoplasmoides</taxon>
    </lineage>
</organism>
<proteinExistence type="inferred from homology"/>